<accession>B5FB81</accession>
<organism>
    <name type="scientific">Aliivibrio fischeri (strain MJ11)</name>
    <name type="common">Vibrio fischeri</name>
    <dbReference type="NCBI Taxonomy" id="388396"/>
    <lineage>
        <taxon>Bacteria</taxon>
        <taxon>Pseudomonadati</taxon>
        <taxon>Pseudomonadota</taxon>
        <taxon>Gammaproteobacteria</taxon>
        <taxon>Vibrionales</taxon>
        <taxon>Vibrionaceae</taxon>
        <taxon>Aliivibrio</taxon>
    </lineage>
</organism>
<evidence type="ECO:0000255" key="1">
    <source>
        <dbReference type="HAMAP-Rule" id="MF_01043"/>
    </source>
</evidence>
<proteinExistence type="inferred from homology"/>
<comment type="function">
    <text evidence="1">Catalyzes the transfer of an acyl group from acyl-phosphate (acyl-PO(4)) to glycerol-3-phosphate (G3P) to form lysophosphatidic acid (LPA). This enzyme utilizes acyl-phosphate as fatty acyl donor, but not acyl-CoA or acyl-ACP.</text>
</comment>
<comment type="catalytic activity">
    <reaction evidence="1">
        <text>an acyl phosphate + sn-glycerol 3-phosphate = a 1-acyl-sn-glycero-3-phosphate + phosphate</text>
        <dbReference type="Rhea" id="RHEA:34075"/>
        <dbReference type="ChEBI" id="CHEBI:43474"/>
        <dbReference type="ChEBI" id="CHEBI:57597"/>
        <dbReference type="ChEBI" id="CHEBI:57970"/>
        <dbReference type="ChEBI" id="CHEBI:59918"/>
        <dbReference type="EC" id="2.3.1.275"/>
    </reaction>
</comment>
<comment type="pathway">
    <text evidence="1">Lipid metabolism; phospholipid metabolism.</text>
</comment>
<comment type="subunit">
    <text evidence="1">Probably interacts with PlsX.</text>
</comment>
<comment type="subcellular location">
    <subcellularLocation>
        <location evidence="1">Cell inner membrane</location>
        <topology evidence="1">Multi-pass membrane protein</topology>
    </subcellularLocation>
</comment>
<comment type="similarity">
    <text evidence="1">Belongs to the PlsY family.</text>
</comment>
<sequence length="198" mass="21461">MTPLALIMIIIAYLLGSISSAVLICRLKGLPDPRTSGSHNPGATNVFRIGGRSAAGLVLLCDILKGMLPVWGGYFLEINPFMLGIIAISACLGHMYPLFFHFKGGKGVATALGALAPIGLDLTGMLFGCWVVTVLVTGYSSLASMITALLAPLFTWLVKPQYTLPVAMLSCLIVLKHHENIKRFFEGKETKIWQRKRD</sequence>
<dbReference type="EC" id="2.3.1.275" evidence="1"/>
<dbReference type="EMBL" id="CP001139">
    <property type="protein sequence ID" value="ACH66532.1"/>
    <property type="molecule type" value="Genomic_DNA"/>
</dbReference>
<dbReference type="RefSeq" id="WP_005421021.1">
    <property type="nucleotide sequence ID" value="NC_011184.1"/>
</dbReference>
<dbReference type="SMR" id="B5FB81"/>
<dbReference type="GeneID" id="54164964"/>
<dbReference type="KEGG" id="vfm:VFMJ11_2359"/>
<dbReference type="HOGENOM" id="CLU_081254_0_2_6"/>
<dbReference type="UniPathway" id="UPA00085"/>
<dbReference type="Proteomes" id="UP000001857">
    <property type="component" value="Chromosome I"/>
</dbReference>
<dbReference type="GO" id="GO:0005886">
    <property type="term" value="C:plasma membrane"/>
    <property type="evidence" value="ECO:0007669"/>
    <property type="project" value="UniProtKB-SubCell"/>
</dbReference>
<dbReference type="GO" id="GO:0043772">
    <property type="term" value="F:acyl-phosphate glycerol-3-phosphate acyltransferase activity"/>
    <property type="evidence" value="ECO:0007669"/>
    <property type="project" value="UniProtKB-UniRule"/>
</dbReference>
<dbReference type="GO" id="GO:0008654">
    <property type="term" value="P:phospholipid biosynthetic process"/>
    <property type="evidence" value="ECO:0007669"/>
    <property type="project" value="UniProtKB-UniRule"/>
</dbReference>
<dbReference type="HAMAP" id="MF_01043">
    <property type="entry name" value="PlsY"/>
    <property type="match status" value="1"/>
</dbReference>
<dbReference type="InterPro" id="IPR003811">
    <property type="entry name" value="G3P_acylTferase_PlsY"/>
</dbReference>
<dbReference type="NCBIfam" id="TIGR00023">
    <property type="entry name" value="glycerol-3-phosphate 1-O-acyltransferase PlsY"/>
    <property type="match status" value="1"/>
</dbReference>
<dbReference type="PANTHER" id="PTHR30309:SF0">
    <property type="entry name" value="GLYCEROL-3-PHOSPHATE ACYLTRANSFERASE-RELATED"/>
    <property type="match status" value="1"/>
</dbReference>
<dbReference type="PANTHER" id="PTHR30309">
    <property type="entry name" value="INNER MEMBRANE PROTEIN YGIH"/>
    <property type="match status" value="1"/>
</dbReference>
<dbReference type="Pfam" id="PF02660">
    <property type="entry name" value="G3P_acyltransf"/>
    <property type="match status" value="1"/>
</dbReference>
<dbReference type="SMART" id="SM01207">
    <property type="entry name" value="G3P_acyltransf"/>
    <property type="match status" value="1"/>
</dbReference>
<name>PLSY_ALIFM</name>
<reference key="1">
    <citation type="submission" date="2008-08" db="EMBL/GenBank/DDBJ databases">
        <title>Complete sequence of Vibrio fischeri strain MJ11.</title>
        <authorList>
            <person name="Mandel M.J."/>
            <person name="Stabb E.V."/>
            <person name="Ruby E.G."/>
            <person name="Ferriera S."/>
            <person name="Johnson J."/>
            <person name="Kravitz S."/>
            <person name="Beeson K."/>
            <person name="Sutton G."/>
            <person name="Rogers Y.-H."/>
            <person name="Friedman R."/>
            <person name="Frazier M."/>
            <person name="Venter J.C."/>
        </authorList>
    </citation>
    <scope>NUCLEOTIDE SEQUENCE [LARGE SCALE GENOMIC DNA]</scope>
    <source>
        <strain>MJ11</strain>
    </source>
</reference>
<feature type="chain" id="PRO_1000136132" description="Glycerol-3-phosphate acyltransferase">
    <location>
        <begin position="1"/>
        <end position="198"/>
    </location>
</feature>
<feature type="transmembrane region" description="Helical" evidence="1">
    <location>
        <begin position="4"/>
        <end position="24"/>
    </location>
</feature>
<feature type="transmembrane region" description="Helical" evidence="1">
    <location>
        <begin position="53"/>
        <end position="75"/>
    </location>
</feature>
<feature type="transmembrane region" description="Helical" evidence="1">
    <location>
        <begin position="80"/>
        <end position="102"/>
    </location>
</feature>
<feature type="transmembrane region" description="Helical" evidence="1">
    <location>
        <begin position="112"/>
        <end position="132"/>
    </location>
</feature>
<feature type="transmembrane region" description="Helical" evidence="1">
    <location>
        <begin position="134"/>
        <end position="154"/>
    </location>
</feature>
<keyword id="KW-0997">Cell inner membrane</keyword>
<keyword id="KW-1003">Cell membrane</keyword>
<keyword id="KW-0444">Lipid biosynthesis</keyword>
<keyword id="KW-0443">Lipid metabolism</keyword>
<keyword id="KW-0472">Membrane</keyword>
<keyword id="KW-0594">Phospholipid biosynthesis</keyword>
<keyword id="KW-1208">Phospholipid metabolism</keyword>
<keyword id="KW-0808">Transferase</keyword>
<keyword id="KW-0812">Transmembrane</keyword>
<keyword id="KW-1133">Transmembrane helix</keyword>
<protein>
    <recommendedName>
        <fullName evidence="1">Glycerol-3-phosphate acyltransferase</fullName>
    </recommendedName>
    <alternativeName>
        <fullName evidence="1">Acyl-PO4 G3P acyltransferase</fullName>
    </alternativeName>
    <alternativeName>
        <fullName evidence="1">Acyl-phosphate--glycerol-3-phosphate acyltransferase</fullName>
    </alternativeName>
    <alternativeName>
        <fullName evidence="1">G3P acyltransferase</fullName>
        <shortName evidence="1">GPAT</shortName>
        <ecNumber evidence="1">2.3.1.275</ecNumber>
    </alternativeName>
    <alternativeName>
        <fullName evidence="1">Lysophosphatidic acid synthase</fullName>
        <shortName evidence="1">LPA synthase</shortName>
    </alternativeName>
</protein>
<gene>
    <name evidence="1" type="primary">plsY</name>
    <name type="ordered locus">VFMJ11_2359</name>
</gene>